<comment type="function">
    <text evidence="1">Catalyzes the reversible interconversion of serine and glycine with tetrahydrofolate (THF) serving as the one-carbon carrier. This reaction serves as the major source of one-carbon groups required for the biosynthesis of purines, thymidylate, methionine, and other important biomolecules. Also exhibits THF-independent aldolase activity toward beta-hydroxyamino acids, producing glycine and aldehydes, via a retro-aldol mechanism.</text>
</comment>
<comment type="catalytic activity">
    <reaction evidence="1">
        <text>(6R)-5,10-methylene-5,6,7,8-tetrahydrofolate + glycine + H2O = (6S)-5,6,7,8-tetrahydrofolate + L-serine</text>
        <dbReference type="Rhea" id="RHEA:15481"/>
        <dbReference type="ChEBI" id="CHEBI:15377"/>
        <dbReference type="ChEBI" id="CHEBI:15636"/>
        <dbReference type="ChEBI" id="CHEBI:33384"/>
        <dbReference type="ChEBI" id="CHEBI:57305"/>
        <dbReference type="ChEBI" id="CHEBI:57453"/>
        <dbReference type="EC" id="2.1.2.1"/>
    </reaction>
</comment>
<comment type="cofactor">
    <cofactor evidence="1">
        <name>pyridoxal 5'-phosphate</name>
        <dbReference type="ChEBI" id="CHEBI:597326"/>
    </cofactor>
</comment>
<comment type="pathway">
    <text evidence="1">One-carbon metabolism; tetrahydrofolate interconversion.</text>
</comment>
<comment type="pathway">
    <text evidence="1">Amino-acid biosynthesis; glycine biosynthesis; glycine from L-serine: step 1/1.</text>
</comment>
<comment type="subunit">
    <text evidence="1">Homodimer.</text>
</comment>
<comment type="subcellular location">
    <subcellularLocation>
        <location evidence="1">Cytoplasm</location>
    </subcellularLocation>
</comment>
<comment type="similarity">
    <text evidence="1">Belongs to the SHMT family.</text>
</comment>
<protein>
    <recommendedName>
        <fullName evidence="1">Serine hydroxymethyltransferase</fullName>
        <shortName evidence="1">SHMT</shortName>
        <shortName evidence="1">Serine methylase</shortName>
        <ecNumber evidence="1">2.1.2.1</ecNumber>
    </recommendedName>
</protein>
<dbReference type="EC" id="2.1.2.1" evidence="1"/>
<dbReference type="EMBL" id="CP001344">
    <property type="protein sequence ID" value="ACL44047.1"/>
    <property type="molecule type" value="Genomic_DNA"/>
</dbReference>
<dbReference type="SMR" id="B8HR59"/>
<dbReference type="STRING" id="395961.Cyan7425_1678"/>
<dbReference type="KEGG" id="cyn:Cyan7425_1678"/>
<dbReference type="eggNOG" id="COG0112">
    <property type="taxonomic scope" value="Bacteria"/>
</dbReference>
<dbReference type="HOGENOM" id="CLU_022477_2_1_3"/>
<dbReference type="OrthoDB" id="9803846at2"/>
<dbReference type="UniPathway" id="UPA00193"/>
<dbReference type="UniPathway" id="UPA00288">
    <property type="reaction ID" value="UER01023"/>
</dbReference>
<dbReference type="GO" id="GO:0005829">
    <property type="term" value="C:cytosol"/>
    <property type="evidence" value="ECO:0007669"/>
    <property type="project" value="TreeGrafter"/>
</dbReference>
<dbReference type="GO" id="GO:0004372">
    <property type="term" value="F:glycine hydroxymethyltransferase activity"/>
    <property type="evidence" value="ECO:0007669"/>
    <property type="project" value="UniProtKB-UniRule"/>
</dbReference>
<dbReference type="GO" id="GO:0030170">
    <property type="term" value="F:pyridoxal phosphate binding"/>
    <property type="evidence" value="ECO:0007669"/>
    <property type="project" value="UniProtKB-UniRule"/>
</dbReference>
<dbReference type="GO" id="GO:0019264">
    <property type="term" value="P:glycine biosynthetic process from serine"/>
    <property type="evidence" value="ECO:0007669"/>
    <property type="project" value="UniProtKB-UniRule"/>
</dbReference>
<dbReference type="GO" id="GO:0035999">
    <property type="term" value="P:tetrahydrofolate interconversion"/>
    <property type="evidence" value="ECO:0007669"/>
    <property type="project" value="UniProtKB-UniRule"/>
</dbReference>
<dbReference type="CDD" id="cd00378">
    <property type="entry name" value="SHMT"/>
    <property type="match status" value="1"/>
</dbReference>
<dbReference type="FunFam" id="3.40.640.10:FF:000001">
    <property type="entry name" value="Serine hydroxymethyltransferase"/>
    <property type="match status" value="1"/>
</dbReference>
<dbReference type="FunFam" id="3.90.1150.10:FF:000003">
    <property type="entry name" value="Serine hydroxymethyltransferase"/>
    <property type="match status" value="1"/>
</dbReference>
<dbReference type="Gene3D" id="3.90.1150.10">
    <property type="entry name" value="Aspartate Aminotransferase, domain 1"/>
    <property type="match status" value="1"/>
</dbReference>
<dbReference type="Gene3D" id="3.40.640.10">
    <property type="entry name" value="Type I PLP-dependent aspartate aminotransferase-like (Major domain)"/>
    <property type="match status" value="1"/>
</dbReference>
<dbReference type="HAMAP" id="MF_00051">
    <property type="entry name" value="SHMT"/>
    <property type="match status" value="1"/>
</dbReference>
<dbReference type="InterPro" id="IPR015424">
    <property type="entry name" value="PyrdxlP-dep_Trfase"/>
</dbReference>
<dbReference type="InterPro" id="IPR015421">
    <property type="entry name" value="PyrdxlP-dep_Trfase_major"/>
</dbReference>
<dbReference type="InterPro" id="IPR015422">
    <property type="entry name" value="PyrdxlP-dep_Trfase_small"/>
</dbReference>
<dbReference type="InterPro" id="IPR001085">
    <property type="entry name" value="Ser_HO-MeTrfase"/>
</dbReference>
<dbReference type="InterPro" id="IPR049943">
    <property type="entry name" value="Ser_HO-MeTrfase-like"/>
</dbReference>
<dbReference type="InterPro" id="IPR019798">
    <property type="entry name" value="Ser_HO-MeTrfase_PLP_BS"/>
</dbReference>
<dbReference type="InterPro" id="IPR039429">
    <property type="entry name" value="SHMT-like_dom"/>
</dbReference>
<dbReference type="NCBIfam" id="NF000586">
    <property type="entry name" value="PRK00011.1"/>
    <property type="match status" value="1"/>
</dbReference>
<dbReference type="PANTHER" id="PTHR11680">
    <property type="entry name" value="SERINE HYDROXYMETHYLTRANSFERASE"/>
    <property type="match status" value="1"/>
</dbReference>
<dbReference type="PANTHER" id="PTHR11680:SF35">
    <property type="entry name" value="SERINE HYDROXYMETHYLTRANSFERASE 1"/>
    <property type="match status" value="1"/>
</dbReference>
<dbReference type="Pfam" id="PF00464">
    <property type="entry name" value="SHMT"/>
    <property type="match status" value="1"/>
</dbReference>
<dbReference type="PIRSF" id="PIRSF000412">
    <property type="entry name" value="SHMT"/>
    <property type="match status" value="1"/>
</dbReference>
<dbReference type="SUPFAM" id="SSF53383">
    <property type="entry name" value="PLP-dependent transferases"/>
    <property type="match status" value="1"/>
</dbReference>
<dbReference type="PROSITE" id="PS00096">
    <property type="entry name" value="SHMT"/>
    <property type="match status" value="1"/>
</dbReference>
<reference key="1">
    <citation type="journal article" date="2011" name="MBio">
        <title>Novel metabolic attributes of the genus Cyanothece, comprising a group of unicellular nitrogen-fixing Cyanobacteria.</title>
        <authorList>
            <person name="Bandyopadhyay A."/>
            <person name="Elvitigala T."/>
            <person name="Welsh E."/>
            <person name="Stockel J."/>
            <person name="Liberton M."/>
            <person name="Min H."/>
            <person name="Sherman L.A."/>
            <person name="Pakrasi H.B."/>
        </authorList>
    </citation>
    <scope>NUCLEOTIDE SEQUENCE [LARGE SCALE GENOMIC DNA]</scope>
    <source>
        <strain>PCC 7425 / ATCC 29141</strain>
    </source>
</reference>
<evidence type="ECO:0000255" key="1">
    <source>
        <dbReference type="HAMAP-Rule" id="MF_00051"/>
    </source>
</evidence>
<accession>B8HR59</accession>
<gene>
    <name evidence="1" type="primary">glyA</name>
    <name type="ordered locus">Cyan7425_1678</name>
</gene>
<keyword id="KW-0028">Amino-acid biosynthesis</keyword>
<keyword id="KW-0963">Cytoplasm</keyword>
<keyword id="KW-0554">One-carbon metabolism</keyword>
<keyword id="KW-0663">Pyridoxal phosphate</keyword>
<keyword id="KW-0808">Transferase</keyword>
<proteinExistence type="inferred from homology"/>
<feature type="chain" id="PRO_1000195441" description="Serine hydroxymethyltransferase">
    <location>
        <begin position="1"/>
        <end position="426"/>
    </location>
</feature>
<feature type="binding site" evidence="1">
    <location>
        <position position="122"/>
    </location>
    <ligand>
        <name>(6S)-5,6,7,8-tetrahydrofolate</name>
        <dbReference type="ChEBI" id="CHEBI:57453"/>
    </ligand>
</feature>
<feature type="binding site" evidence="1">
    <location>
        <begin position="126"/>
        <end position="128"/>
    </location>
    <ligand>
        <name>(6S)-5,6,7,8-tetrahydrofolate</name>
        <dbReference type="ChEBI" id="CHEBI:57453"/>
    </ligand>
</feature>
<feature type="binding site" evidence="1">
    <location>
        <position position="247"/>
    </location>
    <ligand>
        <name>(6S)-5,6,7,8-tetrahydrofolate</name>
        <dbReference type="ChEBI" id="CHEBI:57453"/>
    </ligand>
</feature>
<feature type="binding site" evidence="1">
    <location>
        <begin position="355"/>
        <end position="357"/>
    </location>
    <ligand>
        <name>(6S)-5,6,7,8-tetrahydrofolate</name>
        <dbReference type="ChEBI" id="CHEBI:57453"/>
    </ligand>
</feature>
<feature type="site" description="Plays an important role in substrate specificity" evidence="1">
    <location>
        <position position="230"/>
    </location>
</feature>
<feature type="modified residue" description="N6-(pyridoxal phosphate)lysine" evidence="1">
    <location>
        <position position="231"/>
    </location>
</feature>
<sequence length="426" mass="46515">MTRTNLDFLTETDPAIAGLLQQELQRQQDHLELIASENFTSAAVLAAQGSVLTNKYAEGLPGKRYYGGCEYIDKVEQLAIDRAKDLFQAAHANVQPHSGAQANFAVFLALLQPGDTIMGMDLSHGGHLTHGSPVNVSGKWFRVVHYGVDPVTEQLDYEKIRQLAHQHRPKLIICGYSAYPRIIQFDQFRAIADEVGAYLLADMAHIAGLVATGHHPSPIPVCDVVTTTTHKTLRGPRGGLILTRDPELGKKLDKAVFPGNQGGPLEHVIAAKAVAFGEALRPEFKTYSAQVIKNAQALSQQLQQRGFKIVSNGTDNHLLLVDLRSIGMTGKLADQLVSEVNITANKNTVPFDPESPFVTSGLRLGSAAMTTRGMGTPEFIEIANIIADRLLNPEDLAIVQECRQRVAQLCDRFPLYPHLSRVPVLS</sequence>
<name>GLYA_CYAP4</name>
<organism>
    <name type="scientific">Cyanothece sp. (strain PCC 7425 / ATCC 29141)</name>
    <dbReference type="NCBI Taxonomy" id="395961"/>
    <lineage>
        <taxon>Bacteria</taxon>
        <taxon>Bacillati</taxon>
        <taxon>Cyanobacteriota</taxon>
        <taxon>Cyanophyceae</taxon>
        <taxon>Gomontiellales</taxon>
        <taxon>Cyanothecaceae</taxon>
        <taxon>Cyanothece</taxon>
    </lineage>
</organism>